<name>CBX6_MOUSE</name>
<reference key="1">
    <citation type="journal article" date="2005" name="Science">
        <title>The transcriptional landscape of the mammalian genome.</title>
        <authorList>
            <person name="Carninci P."/>
            <person name="Kasukawa T."/>
            <person name="Katayama S."/>
            <person name="Gough J."/>
            <person name="Frith M.C."/>
            <person name="Maeda N."/>
            <person name="Oyama R."/>
            <person name="Ravasi T."/>
            <person name="Lenhard B."/>
            <person name="Wells C."/>
            <person name="Kodzius R."/>
            <person name="Shimokawa K."/>
            <person name="Bajic V.B."/>
            <person name="Brenner S.E."/>
            <person name="Batalov S."/>
            <person name="Forrest A.R."/>
            <person name="Zavolan M."/>
            <person name="Davis M.J."/>
            <person name="Wilming L.G."/>
            <person name="Aidinis V."/>
            <person name="Allen J.E."/>
            <person name="Ambesi-Impiombato A."/>
            <person name="Apweiler R."/>
            <person name="Aturaliya R.N."/>
            <person name="Bailey T.L."/>
            <person name="Bansal M."/>
            <person name="Baxter L."/>
            <person name="Beisel K.W."/>
            <person name="Bersano T."/>
            <person name="Bono H."/>
            <person name="Chalk A.M."/>
            <person name="Chiu K.P."/>
            <person name="Choudhary V."/>
            <person name="Christoffels A."/>
            <person name="Clutterbuck D.R."/>
            <person name="Crowe M.L."/>
            <person name="Dalla E."/>
            <person name="Dalrymple B.P."/>
            <person name="de Bono B."/>
            <person name="Della Gatta G."/>
            <person name="di Bernardo D."/>
            <person name="Down T."/>
            <person name="Engstrom P."/>
            <person name="Fagiolini M."/>
            <person name="Faulkner G."/>
            <person name="Fletcher C.F."/>
            <person name="Fukushima T."/>
            <person name="Furuno M."/>
            <person name="Futaki S."/>
            <person name="Gariboldi M."/>
            <person name="Georgii-Hemming P."/>
            <person name="Gingeras T.R."/>
            <person name="Gojobori T."/>
            <person name="Green R.E."/>
            <person name="Gustincich S."/>
            <person name="Harbers M."/>
            <person name="Hayashi Y."/>
            <person name="Hensch T.K."/>
            <person name="Hirokawa N."/>
            <person name="Hill D."/>
            <person name="Huminiecki L."/>
            <person name="Iacono M."/>
            <person name="Ikeo K."/>
            <person name="Iwama A."/>
            <person name="Ishikawa T."/>
            <person name="Jakt M."/>
            <person name="Kanapin A."/>
            <person name="Katoh M."/>
            <person name="Kawasawa Y."/>
            <person name="Kelso J."/>
            <person name="Kitamura H."/>
            <person name="Kitano H."/>
            <person name="Kollias G."/>
            <person name="Krishnan S.P."/>
            <person name="Kruger A."/>
            <person name="Kummerfeld S.K."/>
            <person name="Kurochkin I.V."/>
            <person name="Lareau L.F."/>
            <person name="Lazarevic D."/>
            <person name="Lipovich L."/>
            <person name="Liu J."/>
            <person name="Liuni S."/>
            <person name="McWilliam S."/>
            <person name="Madan Babu M."/>
            <person name="Madera M."/>
            <person name="Marchionni L."/>
            <person name="Matsuda H."/>
            <person name="Matsuzawa S."/>
            <person name="Miki H."/>
            <person name="Mignone F."/>
            <person name="Miyake S."/>
            <person name="Morris K."/>
            <person name="Mottagui-Tabar S."/>
            <person name="Mulder N."/>
            <person name="Nakano N."/>
            <person name="Nakauchi H."/>
            <person name="Ng P."/>
            <person name="Nilsson R."/>
            <person name="Nishiguchi S."/>
            <person name="Nishikawa S."/>
            <person name="Nori F."/>
            <person name="Ohara O."/>
            <person name="Okazaki Y."/>
            <person name="Orlando V."/>
            <person name="Pang K.C."/>
            <person name="Pavan W.J."/>
            <person name="Pavesi G."/>
            <person name="Pesole G."/>
            <person name="Petrovsky N."/>
            <person name="Piazza S."/>
            <person name="Reed J."/>
            <person name="Reid J.F."/>
            <person name="Ring B.Z."/>
            <person name="Ringwald M."/>
            <person name="Rost B."/>
            <person name="Ruan Y."/>
            <person name="Salzberg S.L."/>
            <person name="Sandelin A."/>
            <person name="Schneider C."/>
            <person name="Schoenbach C."/>
            <person name="Sekiguchi K."/>
            <person name="Semple C.A."/>
            <person name="Seno S."/>
            <person name="Sessa L."/>
            <person name="Sheng Y."/>
            <person name="Shibata Y."/>
            <person name="Shimada H."/>
            <person name="Shimada K."/>
            <person name="Silva D."/>
            <person name="Sinclair B."/>
            <person name="Sperling S."/>
            <person name="Stupka E."/>
            <person name="Sugiura K."/>
            <person name="Sultana R."/>
            <person name="Takenaka Y."/>
            <person name="Taki K."/>
            <person name="Tammoja K."/>
            <person name="Tan S.L."/>
            <person name="Tang S."/>
            <person name="Taylor M.S."/>
            <person name="Tegner J."/>
            <person name="Teichmann S.A."/>
            <person name="Ueda H.R."/>
            <person name="van Nimwegen E."/>
            <person name="Verardo R."/>
            <person name="Wei C.L."/>
            <person name="Yagi K."/>
            <person name="Yamanishi H."/>
            <person name="Zabarovsky E."/>
            <person name="Zhu S."/>
            <person name="Zimmer A."/>
            <person name="Hide W."/>
            <person name="Bult C."/>
            <person name="Grimmond S.M."/>
            <person name="Teasdale R.D."/>
            <person name="Liu E.T."/>
            <person name="Brusic V."/>
            <person name="Quackenbush J."/>
            <person name="Wahlestedt C."/>
            <person name="Mattick J.S."/>
            <person name="Hume D.A."/>
            <person name="Kai C."/>
            <person name="Sasaki D."/>
            <person name="Tomaru Y."/>
            <person name="Fukuda S."/>
            <person name="Kanamori-Katayama M."/>
            <person name="Suzuki M."/>
            <person name="Aoki J."/>
            <person name="Arakawa T."/>
            <person name="Iida J."/>
            <person name="Imamura K."/>
            <person name="Itoh M."/>
            <person name="Kato T."/>
            <person name="Kawaji H."/>
            <person name="Kawagashira N."/>
            <person name="Kawashima T."/>
            <person name="Kojima M."/>
            <person name="Kondo S."/>
            <person name="Konno H."/>
            <person name="Nakano K."/>
            <person name="Ninomiya N."/>
            <person name="Nishio T."/>
            <person name="Okada M."/>
            <person name="Plessy C."/>
            <person name="Shibata K."/>
            <person name="Shiraki T."/>
            <person name="Suzuki S."/>
            <person name="Tagami M."/>
            <person name="Waki K."/>
            <person name="Watahiki A."/>
            <person name="Okamura-Oho Y."/>
            <person name="Suzuki H."/>
            <person name="Kawai J."/>
            <person name="Hayashizaki Y."/>
        </authorList>
    </citation>
    <scope>NUCLEOTIDE SEQUENCE [LARGE SCALE MRNA]</scope>
    <source>
        <strain>C57BL/6J</strain>
        <tissue>Lung</tissue>
        <tissue>Urinary bladder</tissue>
    </source>
</reference>
<reference key="2">
    <citation type="journal article" date="2004" name="Genome Res.">
        <title>The status, quality, and expansion of the NIH full-length cDNA project: the Mammalian Gene Collection (MGC).</title>
        <authorList>
            <consortium name="The MGC Project Team"/>
        </authorList>
    </citation>
    <scope>NUCLEOTIDE SEQUENCE [LARGE SCALE MRNA]</scope>
    <source>
        <tissue>Eye</tissue>
    </source>
</reference>
<reference key="3">
    <citation type="journal article" date="2006" name="Mol. Cell. Biol.">
        <title>Mouse polycomb proteins bind differentially to methylated histone H3 and RNA and are enriched in facultative heterochromatin.</title>
        <authorList>
            <person name="Bernstein E."/>
            <person name="Duncan E.M."/>
            <person name="Masui O."/>
            <person name="Gil J."/>
            <person name="Heard E."/>
            <person name="Allis C.D."/>
        </authorList>
    </citation>
    <scope>FUNCTION</scope>
    <scope>SUBCELLULAR LOCATION</scope>
    <scope>INTERACTION WITH SSRNA</scope>
</reference>
<reference key="4">
    <citation type="journal article" date="2010" name="Cell">
        <title>A tissue-specific atlas of mouse protein phosphorylation and expression.</title>
        <authorList>
            <person name="Huttlin E.L."/>
            <person name="Jedrychowski M.P."/>
            <person name="Elias J.E."/>
            <person name="Goswami T."/>
            <person name="Rad R."/>
            <person name="Beausoleil S.A."/>
            <person name="Villen J."/>
            <person name="Haas W."/>
            <person name="Sowa M.E."/>
            <person name="Gygi S.P."/>
        </authorList>
    </citation>
    <scope>IDENTIFICATION BY MASS SPECTROMETRY [LARGE SCALE ANALYSIS]</scope>
    <source>
        <tissue>Spleen</tissue>
    </source>
</reference>
<reference key="5">
    <citation type="journal article" date="2012" name="Cell Stem Cell">
        <title>Nonoverlapping functions of the Polycomb group Cbx family of proteins in embryonic stem cells.</title>
        <authorList>
            <person name="Morey L."/>
            <person name="Pascual G."/>
            <person name="Cozzuto L."/>
            <person name="Roma G."/>
            <person name="Wutz A."/>
            <person name="Benitah S.A."/>
            <person name="Di Croce L."/>
        </authorList>
    </citation>
    <scope>FUNCTION</scope>
    <scope>TISSUE SPECIFICITY</scope>
</reference>
<protein>
    <recommendedName>
        <fullName>Chromobox protein homolog 6</fullName>
    </recommendedName>
</protein>
<keyword id="KW-0156">Chromatin regulator</keyword>
<keyword id="KW-0158">Chromosome</keyword>
<keyword id="KW-0539">Nucleus</keyword>
<keyword id="KW-0597">Phosphoprotein</keyword>
<keyword id="KW-1185">Reference proteome</keyword>
<keyword id="KW-0678">Repressor</keyword>
<keyword id="KW-0804">Transcription</keyword>
<keyword id="KW-0805">Transcription regulation</keyword>
<keyword id="KW-0832">Ubl conjugation</keyword>
<comment type="function">
    <text evidence="1 4 5">Component of a Polycomb group (PcG) multiprotein PRC1-like complex, a complex class required to maintain the transcriptionally repressive state of many genes, including Hox genes, throughout development. PcG PRC1 complex acts via chromatin remodeling and modification of histones; it mediates monoubiquitination of histone H2A 'Lys-119', rendering chromatin heritably changed in its expressibility. Possibly contributes to the target selectivity of the PRC1 complex by binding specific regions of chromatin (By similarity). Recruitment to chromatin might occur in an H3K27me3-independent fashion (PubMed:16537902, PubMed:22226355). May have a PRC1-independent function in embryonic stem cells (PubMed:22226355).</text>
</comment>
<comment type="subunit">
    <text evidence="1 4">Component of a PRC1-like complex. Distinct PRC1-like core complexes are composed of a RING1 subunit (RING1B or RING1A), one of the six PCGF proteins (PCGF1-6), one PHC protein (PHC1-3) and one of the CBX proteins (CBX2, CBX4, CBX6, CBX7 or CBX8). Interacts with PCGF1, PCGF2, PCGF3, BMI1, PCGF5, PCGF6, RING1 and RNF2. May interact with H3C15 and H3C1 (By similarity). Interacts (via chromodomain) with single-stranded RNA (ssRNA) (PubMed:16537902).</text>
</comment>
<comment type="subcellular location">
    <subcellularLocation>
        <location evidence="4">Nucleus</location>
    </subcellularLocation>
    <subcellularLocation>
        <location evidence="4">Chromosome</location>
    </subcellularLocation>
    <text evidence="4">Localizes to the inactivated X chromosome in females.</text>
</comment>
<comment type="tissue specificity">
    <text evidence="5">Expressed in mouse embryonic stem cells.</text>
</comment>
<comment type="PTM">
    <text evidence="1">Ubiquitinated. Ubiquitination regulates the function of the Polycomb group (PcG) multiprotein PRC1-like complex. Deubiquitinated by USP26.</text>
</comment>
<organism>
    <name type="scientific">Mus musculus</name>
    <name type="common">Mouse</name>
    <dbReference type="NCBI Taxonomy" id="10090"/>
    <lineage>
        <taxon>Eukaryota</taxon>
        <taxon>Metazoa</taxon>
        <taxon>Chordata</taxon>
        <taxon>Craniata</taxon>
        <taxon>Vertebrata</taxon>
        <taxon>Euteleostomi</taxon>
        <taxon>Mammalia</taxon>
        <taxon>Eutheria</taxon>
        <taxon>Euarchontoglires</taxon>
        <taxon>Glires</taxon>
        <taxon>Rodentia</taxon>
        <taxon>Myomorpha</taxon>
        <taxon>Muroidea</taxon>
        <taxon>Muridae</taxon>
        <taxon>Murinae</taxon>
        <taxon>Mus</taxon>
        <taxon>Mus</taxon>
    </lineage>
</organism>
<dbReference type="EMBL" id="AK004679">
    <property type="protein sequence ID" value="BAB23467.1"/>
    <property type="molecule type" value="mRNA"/>
</dbReference>
<dbReference type="EMBL" id="AK035250">
    <property type="protein sequence ID" value="BAC29001.1"/>
    <property type="molecule type" value="mRNA"/>
</dbReference>
<dbReference type="EMBL" id="BC048240">
    <property type="protein sequence ID" value="AAH48240.1"/>
    <property type="molecule type" value="mRNA"/>
</dbReference>
<dbReference type="CCDS" id="CCDS37142.1"/>
<dbReference type="RefSeq" id="NP_083039.2">
    <property type="nucleotide sequence ID" value="NM_028763.3"/>
</dbReference>
<dbReference type="SMR" id="Q9DBY5"/>
<dbReference type="BioGRID" id="243462">
    <property type="interactions" value="13"/>
</dbReference>
<dbReference type="FunCoup" id="Q9DBY5">
    <property type="interactions" value="2283"/>
</dbReference>
<dbReference type="STRING" id="10090.ENSMUSP00000105255"/>
<dbReference type="GlyGen" id="Q9DBY5">
    <property type="glycosylation" value="1 site"/>
</dbReference>
<dbReference type="iPTMnet" id="Q9DBY5"/>
<dbReference type="PhosphoSitePlus" id="Q9DBY5"/>
<dbReference type="PaxDb" id="10090-ENSMUSP00000105255"/>
<dbReference type="PeptideAtlas" id="Q9DBY5"/>
<dbReference type="ProteomicsDB" id="281233"/>
<dbReference type="Pumba" id="Q9DBY5"/>
<dbReference type="Antibodypedia" id="272">
    <property type="antibodies" value="257 antibodies from 33 providers"/>
</dbReference>
<dbReference type="DNASU" id="494448"/>
<dbReference type="Ensembl" id="ENSMUST00000109627.8">
    <property type="protein sequence ID" value="ENSMUSP00000105255.2"/>
    <property type="gene ID" value="ENSMUSG00000089715.13"/>
</dbReference>
<dbReference type="GeneID" id="494448"/>
<dbReference type="KEGG" id="mmu:494448"/>
<dbReference type="UCSC" id="uc007wuo.1">
    <property type="organism name" value="mouse"/>
</dbReference>
<dbReference type="AGR" id="MGI:3512628"/>
<dbReference type="CTD" id="23466"/>
<dbReference type="MGI" id="MGI:3512628">
    <property type="gene designation" value="Cbx6"/>
</dbReference>
<dbReference type="VEuPathDB" id="HostDB:ENSMUSG00000089715"/>
<dbReference type="eggNOG" id="KOG2748">
    <property type="taxonomic scope" value="Eukaryota"/>
</dbReference>
<dbReference type="GeneTree" id="ENSGT00940000154405"/>
<dbReference type="HOGENOM" id="CLU_042051_2_0_1"/>
<dbReference type="InParanoid" id="Q9DBY5"/>
<dbReference type="OMA" id="CAPRYAG"/>
<dbReference type="OrthoDB" id="1918685at2759"/>
<dbReference type="PhylomeDB" id="Q9DBY5"/>
<dbReference type="TreeFam" id="TF106456"/>
<dbReference type="Reactome" id="R-MMU-8939243">
    <property type="pathway name" value="RUNX1 interacts with co-factors whose precise effect on RUNX1 targets is not known"/>
</dbReference>
<dbReference type="BioGRID-ORCS" id="494448">
    <property type="hits" value="6 hits in 67 CRISPR screens"/>
</dbReference>
<dbReference type="PRO" id="PR:Q9DBY5"/>
<dbReference type="Proteomes" id="UP000000589">
    <property type="component" value="Chromosome 15"/>
</dbReference>
<dbReference type="RNAct" id="Q9DBY5">
    <property type="molecule type" value="protein"/>
</dbReference>
<dbReference type="Bgee" id="ENSMUSG00000089715">
    <property type="expression patterns" value="Expressed in CA3 field of hippocampus and 245 other cell types or tissues"/>
</dbReference>
<dbReference type="ExpressionAtlas" id="Q9DBY5">
    <property type="expression patterns" value="baseline and differential"/>
</dbReference>
<dbReference type="GO" id="GO:0000792">
    <property type="term" value="C:heterochromatin"/>
    <property type="evidence" value="ECO:0000314"/>
    <property type="project" value="UniProtKB"/>
</dbReference>
<dbReference type="GO" id="GO:0016604">
    <property type="term" value="C:nuclear body"/>
    <property type="evidence" value="ECO:0007669"/>
    <property type="project" value="Ensembl"/>
</dbReference>
<dbReference type="GO" id="GO:0005634">
    <property type="term" value="C:nucleus"/>
    <property type="evidence" value="ECO:0000314"/>
    <property type="project" value="UniProtKB"/>
</dbReference>
<dbReference type="GO" id="GO:0031519">
    <property type="term" value="C:PcG protein complex"/>
    <property type="evidence" value="ECO:0000250"/>
    <property type="project" value="UniProtKB"/>
</dbReference>
<dbReference type="GO" id="GO:0003727">
    <property type="term" value="F:single-stranded RNA binding"/>
    <property type="evidence" value="ECO:0000314"/>
    <property type="project" value="UniProtKB"/>
</dbReference>
<dbReference type="GO" id="GO:0006325">
    <property type="term" value="P:chromatin organization"/>
    <property type="evidence" value="ECO:0007669"/>
    <property type="project" value="UniProtKB-KW"/>
</dbReference>
<dbReference type="GO" id="GO:0000122">
    <property type="term" value="P:negative regulation of transcription by RNA polymerase II"/>
    <property type="evidence" value="ECO:0007669"/>
    <property type="project" value="Ensembl"/>
</dbReference>
<dbReference type="CDD" id="cd18648">
    <property type="entry name" value="CD_Cbx6"/>
    <property type="match status" value="1"/>
</dbReference>
<dbReference type="FunFam" id="2.40.50.40:FF:000006">
    <property type="entry name" value="Chromobox protein homolog 7"/>
    <property type="match status" value="1"/>
</dbReference>
<dbReference type="Gene3D" id="2.40.50.40">
    <property type="match status" value="1"/>
</dbReference>
<dbReference type="InterPro" id="IPR033773">
    <property type="entry name" value="CBX7_C"/>
</dbReference>
<dbReference type="InterPro" id="IPR016197">
    <property type="entry name" value="Chromo-like_dom_sf"/>
</dbReference>
<dbReference type="InterPro" id="IPR000953">
    <property type="entry name" value="Chromo/chromo_shadow_dom"/>
</dbReference>
<dbReference type="InterPro" id="IPR017984">
    <property type="entry name" value="Chromo_dom_subgr"/>
</dbReference>
<dbReference type="InterPro" id="IPR023780">
    <property type="entry name" value="Chromo_domain"/>
</dbReference>
<dbReference type="InterPro" id="IPR023779">
    <property type="entry name" value="Chromodomain_CS"/>
</dbReference>
<dbReference type="InterPro" id="IPR052458">
    <property type="entry name" value="PcG_PRC1-like_component"/>
</dbReference>
<dbReference type="PANTHER" id="PTHR46389:SF4">
    <property type="entry name" value="CHROMOBOX PROTEIN HOMOLOG 6"/>
    <property type="match status" value="1"/>
</dbReference>
<dbReference type="PANTHER" id="PTHR46389">
    <property type="entry name" value="POLYCOMB GROUP PROTEIN PC"/>
    <property type="match status" value="1"/>
</dbReference>
<dbReference type="Pfam" id="PF17218">
    <property type="entry name" value="CBX7_C"/>
    <property type="match status" value="1"/>
</dbReference>
<dbReference type="Pfam" id="PF00385">
    <property type="entry name" value="Chromo"/>
    <property type="match status" value="1"/>
</dbReference>
<dbReference type="PRINTS" id="PR00504">
    <property type="entry name" value="CHROMODOMAIN"/>
</dbReference>
<dbReference type="SMART" id="SM00298">
    <property type="entry name" value="CHROMO"/>
    <property type="match status" value="1"/>
</dbReference>
<dbReference type="SUPFAM" id="SSF54160">
    <property type="entry name" value="Chromo domain-like"/>
    <property type="match status" value="1"/>
</dbReference>
<dbReference type="PROSITE" id="PS00598">
    <property type="entry name" value="CHROMO_1"/>
    <property type="match status" value="1"/>
</dbReference>
<dbReference type="PROSITE" id="PS50013">
    <property type="entry name" value="CHROMO_2"/>
    <property type="match status" value="1"/>
</dbReference>
<sequence length="414" mass="44460">MELSAVGERVFAAESIIKRRIRKGRIEYLVKWKGWAIKYSTWEPEENILDSRLIAAFEQKERERELYGPKKRGPKPKTFLLKARAQAEALRISDVHFSVKPSASASSPKLHSSAAVHRLKKDIRRCHRMSRRPLPRPDPQGGSPGLRPPISPFSETVRIINRKVKPREPKRNRIILNLKVIDKGPGGGSTAQGTGALARPKVPSRNRVIGKSKKFSESMLRTQIRHMKFGTFALYKPPPAPLAPSTAGKADVASSGPGLLLATPAAAPFDAHSSSSSGCPSPTLQSSDPDDAPPKLLPETLSRSVPNWRESEVLDLSIPPEAAATGQRVPPDVTGAADQALHTALEPTGAGSSEPEAGDWRPEMSPCSNVVVTDVTSNLLTVTIKEFCSPEDFEKVAAGVAGATGGGGGTGPSK</sequence>
<gene>
    <name type="primary">Cbx6</name>
</gene>
<feature type="chain" id="PRO_0000080211" description="Chromobox protein homolog 6">
    <location>
        <begin position="1"/>
        <end position="414"/>
    </location>
</feature>
<feature type="domain" description="Chromo" evidence="2">
    <location>
        <begin position="11"/>
        <end position="69"/>
    </location>
</feature>
<feature type="region of interest" description="Disordered" evidence="3">
    <location>
        <begin position="127"/>
        <end position="152"/>
    </location>
</feature>
<feature type="region of interest" description="Disordered" evidence="3">
    <location>
        <begin position="267"/>
        <end position="308"/>
    </location>
</feature>
<feature type="region of interest" description="Disordered" evidence="3">
    <location>
        <begin position="344"/>
        <end position="365"/>
    </location>
</feature>
<feature type="compositionally biased region" description="Low complexity" evidence="3">
    <location>
        <begin position="267"/>
        <end position="287"/>
    </location>
</feature>
<feature type="modified residue" description="Phosphoserine" evidence="1">
    <location>
        <position position="107"/>
    </location>
</feature>
<feature type="sequence conflict" description="In Ref. 1; BAB23467." evidence="6" ref="1">
    <original>Q</original>
    <variation>P</variation>
    <location>
        <position position="223"/>
    </location>
</feature>
<proteinExistence type="evidence at protein level"/>
<evidence type="ECO:0000250" key="1">
    <source>
        <dbReference type="UniProtKB" id="O95503"/>
    </source>
</evidence>
<evidence type="ECO:0000255" key="2">
    <source>
        <dbReference type="PROSITE-ProRule" id="PRU00053"/>
    </source>
</evidence>
<evidence type="ECO:0000256" key="3">
    <source>
        <dbReference type="SAM" id="MobiDB-lite"/>
    </source>
</evidence>
<evidence type="ECO:0000269" key="4">
    <source>
    </source>
</evidence>
<evidence type="ECO:0000269" key="5">
    <source>
    </source>
</evidence>
<evidence type="ECO:0000305" key="6"/>
<accession>Q9DBY5</accession>
<accession>Q8BZH5</accession>